<feature type="signal peptide" evidence="2">
    <location>
        <begin position="1"/>
        <end position="20"/>
    </location>
</feature>
<feature type="peptide" id="PRO_0000006994" description="Beta-defensin 123">
    <location>
        <begin position="21"/>
        <end position="67"/>
    </location>
</feature>
<feature type="disulfide bond" evidence="1">
    <location>
        <begin position="25"/>
        <end position="52"/>
    </location>
</feature>
<feature type="disulfide bond" evidence="1">
    <location>
        <begin position="32"/>
        <end position="46"/>
    </location>
</feature>
<feature type="disulfide bond" evidence="1">
    <location>
        <begin position="36"/>
        <end position="53"/>
    </location>
</feature>
<feature type="splice variant" id="VSP_057460" description="In isoform 2." evidence="5">
    <original>GGTQRCWNL</original>
    <variation>DLSNPESTC</variation>
    <location>
        <begin position="20"/>
        <end position="28"/>
    </location>
</feature>
<feature type="splice variant" id="VSP_057461" description="In isoform 2." evidence="5">
    <location>
        <begin position="29"/>
        <end position="67"/>
    </location>
</feature>
<proteinExistence type="evidence at transcript level"/>
<name>DB123_HUMAN</name>
<keyword id="KW-0025">Alternative splicing</keyword>
<keyword id="KW-0044">Antibiotic</keyword>
<keyword id="KW-0929">Antimicrobial</keyword>
<keyword id="KW-0211">Defensin</keyword>
<keyword id="KW-1015">Disulfide bond</keyword>
<keyword id="KW-1185">Reference proteome</keyword>
<keyword id="KW-0964">Secreted</keyword>
<keyword id="KW-0732">Signal</keyword>
<reference key="1">
    <citation type="journal article" date="2002" name="Proc. Natl. Acad. Sci. U.S.A.">
        <title>Discovery of five conserved beta-defensin gene clusters using a computational search strategy.</title>
        <authorList>
            <person name="Schutte B.C."/>
            <person name="Mitros J.P."/>
            <person name="Bartlett J.A."/>
            <person name="Walters J.D."/>
            <person name="Jia H.P."/>
            <person name="Welsh M.J."/>
            <person name="Casavant T.L."/>
            <person name="McCray P.B. Jr."/>
        </authorList>
    </citation>
    <scope>NUCLEOTIDE SEQUENCE [MRNA] (ISOFORM 1)</scope>
    <scope>IDENTIFICATION</scope>
    <source>
        <tissue>Germ cell</tissue>
    </source>
</reference>
<reference key="2">
    <citation type="journal article" date="2005" name="Genes Immun.">
        <title>Identification, characterization, and evolution of a primate beta-defensin gene cluster.</title>
        <authorList>
            <person name="Radhakrishnan Y."/>
            <person name="Hamil K.G."/>
            <person name="Yenugu S."/>
            <person name="Young S.L."/>
            <person name="French F.S."/>
            <person name="Hall S.H."/>
        </authorList>
    </citation>
    <scope>NUCLEOTIDE SEQUENCE [MRNA] (ISOFORM 2)</scope>
    <scope>TISSUE SPECIFICITY</scope>
    <source>
        <tissue>Testis</tissue>
    </source>
</reference>
<reference key="3">
    <citation type="submission" date="2002-01" db="EMBL/GenBank/DDBJ databases">
        <authorList>
            <person name="Hamil K.G."/>
            <person name="Hall S.H."/>
        </authorList>
    </citation>
    <scope>NUCLEOTIDE SEQUENCE [MRNA] (ISOFORM 1)</scope>
</reference>
<reference key="4">
    <citation type="journal article" date="2003" name="Genome Res.">
        <title>The secreted protein discovery initiative (SPDI), a large-scale effort to identify novel human secreted and transmembrane proteins: a bioinformatics assessment.</title>
        <authorList>
            <person name="Clark H.F."/>
            <person name="Gurney A.L."/>
            <person name="Abaya E."/>
            <person name="Baker K."/>
            <person name="Baldwin D.T."/>
            <person name="Brush J."/>
            <person name="Chen J."/>
            <person name="Chow B."/>
            <person name="Chui C."/>
            <person name="Crowley C."/>
            <person name="Currell B."/>
            <person name="Deuel B."/>
            <person name="Dowd P."/>
            <person name="Eaton D."/>
            <person name="Foster J.S."/>
            <person name="Grimaldi C."/>
            <person name="Gu Q."/>
            <person name="Hass P.E."/>
            <person name="Heldens S."/>
            <person name="Huang A."/>
            <person name="Kim H.S."/>
            <person name="Klimowski L."/>
            <person name="Jin Y."/>
            <person name="Johnson S."/>
            <person name="Lee J."/>
            <person name="Lewis L."/>
            <person name="Liao D."/>
            <person name="Mark M.R."/>
            <person name="Robbie E."/>
            <person name="Sanchez C."/>
            <person name="Schoenfeld J."/>
            <person name="Seshagiri S."/>
            <person name="Simmons L."/>
            <person name="Singh J."/>
            <person name="Smith V."/>
            <person name="Stinson J."/>
            <person name="Vagts A."/>
            <person name="Vandlen R.L."/>
            <person name="Watanabe C."/>
            <person name="Wieand D."/>
            <person name="Woods K."/>
            <person name="Xie M.-H."/>
            <person name="Yansura D.G."/>
            <person name="Yi S."/>
            <person name="Yu G."/>
            <person name="Yuan J."/>
            <person name="Zhang M."/>
            <person name="Zhang Z."/>
            <person name="Goddard A.D."/>
            <person name="Wood W.I."/>
            <person name="Godowski P.J."/>
            <person name="Gray A.M."/>
        </authorList>
    </citation>
    <scope>NUCLEOTIDE SEQUENCE [LARGE SCALE MRNA] (ISOFORM 1)</scope>
</reference>
<reference key="5">
    <citation type="journal article" date="2001" name="Nature">
        <title>The DNA sequence and comparative analysis of human chromosome 20.</title>
        <authorList>
            <person name="Deloukas P."/>
            <person name="Matthews L.H."/>
            <person name="Ashurst J.L."/>
            <person name="Burton J."/>
            <person name="Gilbert J.G.R."/>
            <person name="Jones M."/>
            <person name="Stavrides G."/>
            <person name="Almeida J.P."/>
            <person name="Babbage A.K."/>
            <person name="Bagguley C.L."/>
            <person name="Bailey J."/>
            <person name="Barlow K.F."/>
            <person name="Bates K.N."/>
            <person name="Beard L.M."/>
            <person name="Beare D.M."/>
            <person name="Beasley O.P."/>
            <person name="Bird C.P."/>
            <person name="Blakey S.E."/>
            <person name="Bridgeman A.M."/>
            <person name="Brown A.J."/>
            <person name="Buck D."/>
            <person name="Burrill W.D."/>
            <person name="Butler A.P."/>
            <person name="Carder C."/>
            <person name="Carter N.P."/>
            <person name="Chapman J.C."/>
            <person name="Clamp M."/>
            <person name="Clark G."/>
            <person name="Clark L.N."/>
            <person name="Clark S.Y."/>
            <person name="Clee C.M."/>
            <person name="Clegg S."/>
            <person name="Cobley V.E."/>
            <person name="Collier R.E."/>
            <person name="Connor R.E."/>
            <person name="Corby N.R."/>
            <person name="Coulson A."/>
            <person name="Coville G.J."/>
            <person name="Deadman R."/>
            <person name="Dhami P.D."/>
            <person name="Dunn M."/>
            <person name="Ellington A.G."/>
            <person name="Frankland J.A."/>
            <person name="Fraser A."/>
            <person name="French L."/>
            <person name="Garner P."/>
            <person name="Grafham D.V."/>
            <person name="Griffiths C."/>
            <person name="Griffiths M.N.D."/>
            <person name="Gwilliam R."/>
            <person name="Hall R.E."/>
            <person name="Hammond S."/>
            <person name="Harley J.L."/>
            <person name="Heath P.D."/>
            <person name="Ho S."/>
            <person name="Holden J.L."/>
            <person name="Howden P.J."/>
            <person name="Huckle E."/>
            <person name="Hunt A.R."/>
            <person name="Hunt S.E."/>
            <person name="Jekosch K."/>
            <person name="Johnson C.M."/>
            <person name="Johnson D."/>
            <person name="Kay M.P."/>
            <person name="Kimberley A.M."/>
            <person name="King A."/>
            <person name="Knights A."/>
            <person name="Laird G.K."/>
            <person name="Lawlor S."/>
            <person name="Lehvaeslaiho M.H."/>
            <person name="Leversha M.A."/>
            <person name="Lloyd C."/>
            <person name="Lloyd D.M."/>
            <person name="Lovell J.D."/>
            <person name="Marsh V.L."/>
            <person name="Martin S.L."/>
            <person name="McConnachie L.J."/>
            <person name="McLay K."/>
            <person name="McMurray A.A."/>
            <person name="Milne S.A."/>
            <person name="Mistry D."/>
            <person name="Moore M.J.F."/>
            <person name="Mullikin J.C."/>
            <person name="Nickerson T."/>
            <person name="Oliver K."/>
            <person name="Parker A."/>
            <person name="Patel R."/>
            <person name="Pearce T.A.V."/>
            <person name="Peck A.I."/>
            <person name="Phillimore B.J.C.T."/>
            <person name="Prathalingam S.R."/>
            <person name="Plumb R.W."/>
            <person name="Ramsay H."/>
            <person name="Rice C.M."/>
            <person name="Ross M.T."/>
            <person name="Scott C.E."/>
            <person name="Sehra H.K."/>
            <person name="Shownkeen R."/>
            <person name="Sims S."/>
            <person name="Skuce C.D."/>
            <person name="Smith M.L."/>
            <person name="Soderlund C."/>
            <person name="Steward C.A."/>
            <person name="Sulston J.E."/>
            <person name="Swann R.M."/>
            <person name="Sycamore N."/>
            <person name="Taylor R."/>
            <person name="Tee L."/>
            <person name="Thomas D.W."/>
            <person name="Thorpe A."/>
            <person name="Tracey A."/>
            <person name="Tromans A.C."/>
            <person name="Vaudin M."/>
            <person name="Wall M."/>
            <person name="Wallis J.M."/>
            <person name="Whitehead S.L."/>
            <person name="Whittaker P."/>
            <person name="Willey D.L."/>
            <person name="Williams L."/>
            <person name="Williams S.A."/>
            <person name="Wilming L."/>
            <person name="Wray P.W."/>
            <person name="Hubbard T."/>
            <person name="Durbin R.M."/>
            <person name="Bentley D.R."/>
            <person name="Beck S."/>
            <person name="Rogers J."/>
        </authorList>
    </citation>
    <scope>NUCLEOTIDE SEQUENCE [LARGE SCALE GENOMIC DNA]</scope>
</reference>
<reference key="6">
    <citation type="submission" date="2005-09" db="EMBL/GenBank/DDBJ databases">
        <authorList>
            <person name="Mural R.J."/>
            <person name="Istrail S."/>
            <person name="Sutton G.G."/>
            <person name="Florea L."/>
            <person name="Halpern A.L."/>
            <person name="Mobarry C.M."/>
            <person name="Lippert R."/>
            <person name="Walenz B."/>
            <person name="Shatkay H."/>
            <person name="Dew I."/>
            <person name="Miller J.R."/>
            <person name="Flanigan M.J."/>
            <person name="Edwards N.J."/>
            <person name="Bolanos R."/>
            <person name="Fasulo D."/>
            <person name="Halldorsson B.V."/>
            <person name="Hannenhalli S."/>
            <person name="Turner R."/>
            <person name="Yooseph S."/>
            <person name="Lu F."/>
            <person name="Nusskern D.R."/>
            <person name="Shue B.C."/>
            <person name="Zheng X.H."/>
            <person name="Zhong F."/>
            <person name="Delcher A.L."/>
            <person name="Huson D.H."/>
            <person name="Kravitz S.A."/>
            <person name="Mouchard L."/>
            <person name="Reinert K."/>
            <person name="Remington K.A."/>
            <person name="Clark A.G."/>
            <person name="Waterman M.S."/>
            <person name="Eichler E.E."/>
            <person name="Adams M.D."/>
            <person name="Hunkapiller M.W."/>
            <person name="Myers E.W."/>
            <person name="Venter J.C."/>
        </authorList>
    </citation>
    <scope>NUCLEOTIDE SEQUENCE [LARGE SCALE GENOMIC DNA]</scope>
</reference>
<reference key="7">
    <citation type="journal article" date="2004" name="Genome Res.">
        <title>The status, quality, and expansion of the NIH full-length cDNA project: the Mammalian Gene Collection (MGC).</title>
        <authorList>
            <consortium name="The MGC Project Team"/>
        </authorList>
    </citation>
    <scope>NUCLEOTIDE SEQUENCE [LARGE SCALE MRNA] (ISOFORM 1)</scope>
</reference>
<gene>
    <name type="primary">DEFB123</name>
    <name type="synonym">DEFB23</name>
    <name type="ORF">UNQ1963/PRO4485</name>
</gene>
<protein>
    <recommendedName>
        <fullName>Beta-defensin 123</fullName>
    </recommendedName>
    <alternativeName>
        <fullName>Beta-defensin 23</fullName>
        <shortName>DEFB-23</shortName>
    </alternativeName>
    <alternativeName>
        <fullName>Defensin, beta 123</fullName>
    </alternativeName>
</protein>
<evidence type="ECO:0000250" key="1"/>
<evidence type="ECO:0000255" key="2"/>
<evidence type="ECO:0000269" key="3">
    <source>
    </source>
</evidence>
<evidence type="ECO:0000305" key="4"/>
<evidence type="ECO:0000305" key="5">
    <source>
    </source>
</evidence>
<sequence>MKLLLLTLTVLLLLSQLTPGGTQRCWNLYGKCRYRCSKKERVYVYCINNKMCCVKPKYQPKERWWPF</sequence>
<dbReference type="EMBL" id="AY122475">
    <property type="protein sequence ID" value="AAM93916.1"/>
    <property type="molecule type" value="mRNA"/>
</dbReference>
<dbReference type="EMBL" id="AY501002">
    <property type="protein sequence ID" value="AAS87296.1"/>
    <property type="molecule type" value="mRNA"/>
</dbReference>
<dbReference type="EMBL" id="AF479701">
    <property type="protein sequence ID" value="AAQ05840.1"/>
    <property type="molecule type" value="mRNA"/>
</dbReference>
<dbReference type="EMBL" id="AY358859">
    <property type="protein sequence ID" value="AAQ89218.1"/>
    <property type="molecule type" value="mRNA"/>
</dbReference>
<dbReference type="EMBL" id="AL121751">
    <property type="status" value="NOT_ANNOTATED_CDS"/>
    <property type="molecule type" value="Genomic_DNA"/>
</dbReference>
<dbReference type="EMBL" id="CH471077">
    <property type="protein sequence ID" value="EAW76445.1"/>
    <property type="molecule type" value="Genomic_DNA"/>
</dbReference>
<dbReference type="EMBL" id="BC126365">
    <property type="protein sequence ID" value="AAI26366.1"/>
    <property type="molecule type" value="mRNA"/>
</dbReference>
<dbReference type="EMBL" id="BC126391">
    <property type="protein sequence ID" value="AAI26392.1"/>
    <property type="molecule type" value="mRNA"/>
</dbReference>
<dbReference type="CCDS" id="CCDS13180.1">
    <molecule id="Q8N688-1"/>
</dbReference>
<dbReference type="RefSeq" id="NP_697019.1">
    <molecule id="Q8N688-1"/>
    <property type="nucleotide sequence ID" value="NM_153324.4"/>
</dbReference>
<dbReference type="SMR" id="Q8N688"/>
<dbReference type="BioGRID" id="128849">
    <property type="interactions" value="39"/>
</dbReference>
<dbReference type="IntAct" id="Q8N688">
    <property type="interactions" value="15"/>
</dbReference>
<dbReference type="STRING" id="9606.ENSP00000365486"/>
<dbReference type="iPTMnet" id="Q8N688"/>
<dbReference type="PhosphoSitePlus" id="Q8N688"/>
<dbReference type="BioMuta" id="DEFB123"/>
<dbReference type="DMDM" id="26392719"/>
<dbReference type="MassIVE" id="Q8N688"/>
<dbReference type="PaxDb" id="9606-ENSP00000365486"/>
<dbReference type="PeptideAtlas" id="Q8N688"/>
<dbReference type="ProteomicsDB" id="72142">
    <molecule id="Q8N688-1"/>
</dbReference>
<dbReference type="Antibodypedia" id="82494">
    <property type="antibodies" value="1 antibodies from 1 providers"/>
</dbReference>
<dbReference type="DNASU" id="245936"/>
<dbReference type="Ensembl" id="ENST00000376309.4">
    <molecule id="Q8N688-1"/>
    <property type="protein sequence ID" value="ENSP00000365486.3"/>
    <property type="gene ID" value="ENSG00000180424.7"/>
</dbReference>
<dbReference type="GeneID" id="245936"/>
<dbReference type="KEGG" id="hsa:245936"/>
<dbReference type="MANE-Select" id="ENST00000376309.4">
    <property type="protein sequence ID" value="ENSP00000365486.3"/>
    <property type="RefSeq nucleotide sequence ID" value="NM_153324.4"/>
    <property type="RefSeq protein sequence ID" value="NP_697019.1"/>
</dbReference>
<dbReference type="UCSC" id="uc002wvy.4">
    <molecule id="Q8N688-1"/>
    <property type="organism name" value="human"/>
</dbReference>
<dbReference type="AGR" id="HGNC:18103"/>
<dbReference type="CTD" id="245936"/>
<dbReference type="DisGeNET" id="245936"/>
<dbReference type="GeneCards" id="DEFB123"/>
<dbReference type="HGNC" id="HGNC:18103">
    <property type="gene designation" value="DEFB123"/>
</dbReference>
<dbReference type="HPA" id="ENSG00000180424">
    <property type="expression patterns" value="Group enriched (epididymis, testis)"/>
</dbReference>
<dbReference type="MIM" id="616076">
    <property type="type" value="gene"/>
</dbReference>
<dbReference type="neXtProt" id="NX_Q8N688"/>
<dbReference type="PharmGKB" id="PA38499"/>
<dbReference type="VEuPathDB" id="HostDB:ENSG00000180424"/>
<dbReference type="eggNOG" id="ENOG502TIGY">
    <property type="taxonomic scope" value="Eukaryota"/>
</dbReference>
<dbReference type="GeneTree" id="ENSGT00940000162385"/>
<dbReference type="HOGENOM" id="CLU_181906_2_0_1"/>
<dbReference type="InParanoid" id="Q8N688"/>
<dbReference type="OMA" id="RCWNLHG"/>
<dbReference type="OrthoDB" id="9827959at2759"/>
<dbReference type="PAN-GO" id="Q8N688">
    <property type="GO annotations" value="0 GO annotations based on evolutionary models"/>
</dbReference>
<dbReference type="PhylomeDB" id="Q8N688"/>
<dbReference type="TreeFam" id="TF336381"/>
<dbReference type="PathwayCommons" id="Q8N688"/>
<dbReference type="Reactome" id="R-HSA-1461957">
    <property type="pathway name" value="Beta defensins"/>
</dbReference>
<dbReference type="Reactome" id="R-HSA-1461973">
    <property type="pathway name" value="Defensins"/>
</dbReference>
<dbReference type="BioGRID-ORCS" id="245936">
    <property type="hits" value="12 hits in 1128 CRISPR screens"/>
</dbReference>
<dbReference type="GenomeRNAi" id="245936"/>
<dbReference type="Pharos" id="Q8N688">
    <property type="development level" value="Tdark"/>
</dbReference>
<dbReference type="PRO" id="PR:Q8N688"/>
<dbReference type="Proteomes" id="UP000005640">
    <property type="component" value="Chromosome 20"/>
</dbReference>
<dbReference type="RNAct" id="Q8N688">
    <property type="molecule type" value="protein"/>
</dbReference>
<dbReference type="Bgee" id="ENSG00000180424">
    <property type="expression patterns" value="Expressed in right testis and 92 other cell types or tissues"/>
</dbReference>
<dbReference type="GO" id="GO:0005576">
    <property type="term" value="C:extracellular region"/>
    <property type="evidence" value="ECO:0007669"/>
    <property type="project" value="UniProtKB-SubCell"/>
</dbReference>
<dbReference type="GO" id="GO:0050829">
    <property type="term" value="P:defense response to Gram-negative bacterium"/>
    <property type="evidence" value="ECO:0007669"/>
    <property type="project" value="UniProtKB-ARBA"/>
</dbReference>
<dbReference type="GO" id="GO:0045087">
    <property type="term" value="P:innate immune response"/>
    <property type="evidence" value="ECO:0007669"/>
    <property type="project" value="InterPro"/>
</dbReference>
<dbReference type="Gene3D" id="3.10.360.10">
    <property type="entry name" value="Antimicrobial Peptide, Beta-defensin 2, Chain A"/>
    <property type="match status" value="1"/>
</dbReference>
<dbReference type="InterPro" id="IPR050544">
    <property type="entry name" value="Beta-defensin"/>
</dbReference>
<dbReference type="InterPro" id="IPR025933">
    <property type="entry name" value="Beta_defensin_dom"/>
</dbReference>
<dbReference type="PANTHER" id="PTHR15001:SF3">
    <property type="entry name" value="BETA-DEFENSIN 123"/>
    <property type="match status" value="1"/>
</dbReference>
<dbReference type="PANTHER" id="PTHR15001">
    <property type="entry name" value="BETA-DEFENSIN 123-RELATED"/>
    <property type="match status" value="1"/>
</dbReference>
<dbReference type="Pfam" id="PF13841">
    <property type="entry name" value="Defensin_beta_2"/>
    <property type="match status" value="1"/>
</dbReference>
<comment type="function">
    <text evidence="4">Has antibacterial activity.</text>
</comment>
<comment type="subcellular location">
    <subcellularLocation>
        <location evidence="4">Secreted</location>
    </subcellularLocation>
</comment>
<comment type="alternative products">
    <event type="alternative splicing"/>
    <isoform>
        <id>Q8N688-1</id>
        <name>1</name>
        <sequence type="displayed"/>
    </isoform>
    <isoform>
        <id>Q8N688-2</id>
        <name>2</name>
        <sequence type="described" ref="VSP_057460 VSP_057461"/>
    </isoform>
</comment>
<comment type="tissue specificity">
    <text evidence="3">Abundant expression in the male reproductive tract only. Abundant expressed in testis and the caput region of epididymis, but low in the corpus region.</text>
</comment>
<comment type="similarity">
    <text evidence="4">Belongs to the beta-defensin family.</text>
</comment>
<accession>Q8N688</accession>
<accession>Q5GRF8</accession>
<accession>Q5J5C7</accession>
<organism>
    <name type="scientific">Homo sapiens</name>
    <name type="common">Human</name>
    <dbReference type="NCBI Taxonomy" id="9606"/>
    <lineage>
        <taxon>Eukaryota</taxon>
        <taxon>Metazoa</taxon>
        <taxon>Chordata</taxon>
        <taxon>Craniata</taxon>
        <taxon>Vertebrata</taxon>
        <taxon>Euteleostomi</taxon>
        <taxon>Mammalia</taxon>
        <taxon>Eutheria</taxon>
        <taxon>Euarchontoglires</taxon>
        <taxon>Primates</taxon>
        <taxon>Haplorrhini</taxon>
        <taxon>Catarrhini</taxon>
        <taxon>Hominidae</taxon>
        <taxon>Homo</taxon>
    </lineage>
</organism>